<proteinExistence type="inferred from homology"/>
<keyword id="KW-0131">Cell cycle</keyword>
<keyword id="KW-0132">Cell division</keyword>
<keyword id="KW-0997">Cell inner membrane</keyword>
<keyword id="KW-1003">Cell membrane</keyword>
<keyword id="KW-0133">Cell shape</keyword>
<keyword id="KW-0961">Cell wall biogenesis/degradation</keyword>
<keyword id="KW-0460">Magnesium</keyword>
<keyword id="KW-0472">Membrane</keyword>
<keyword id="KW-0479">Metal-binding</keyword>
<keyword id="KW-0573">Peptidoglycan synthesis</keyword>
<keyword id="KW-1185">Reference proteome</keyword>
<keyword id="KW-0808">Transferase</keyword>
<keyword id="KW-0812">Transmembrane</keyword>
<keyword id="KW-1133">Transmembrane helix</keyword>
<gene>
    <name evidence="1" type="primary">mraY</name>
    <name type="ordered locus">Tbd_0116</name>
</gene>
<organism>
    <name type="scientific">Thiobacillus denitrificans (strain ATCC 25259 / T1)</name>
    <dbReference type="NCBI Taxonomy" id="292415"/>
    <lineage>
        <taxon>Bacteria</taxon>
        <taxon>Pseudomonadati</taxon>
        <taxon>Pseudomonadota</taxon>
        <taxon>Betaproteobacteria</taxon>
        <taxon>Nitrosomonadales</taxon>
        <taxon>Thiobacillaceae</taxon>
        <taxon>Thiobacillus</taxon>
    </lineage>
</organism>
<accession>Q3SMH6</accession>
<name>MRAY_THIDA</name>
<feature type="chain" id="PRO_0000235497" description="Phospho-N-acetylmuramoyl-pentapeptide-transferase">
    <location>
        <begin position="1"/>
        <end position="361"/>
    </location>
</feature>
<feature type="transmembrane region" description="Helical" evidence="1">
    <location>
        <begin position="25"/>
        <end position="45"/>
    </location>
</feature>
<feature type="transmembrane region" description="Helical" evidence="1">
    <location>
        <begin position="73"/>
        <end position="93"/>
    </location>
</feature>
<feature type="transmembrane region" description="Helical" evidence="1">
    <location>
        <begin position="97"/>
        <end position="117"/>
    </location>
</feature>
<feature type="transmembrane region" description="Helical" evidence="1">
    <location>
        <begin position="134"/>
        <end position="154"/>
    </location>
</feature>
<feature type="transmembrane region" description="Helical" evidence="1">
    <location>
        <begin position="168"/>
        <end position="188"/>
    </location>
</feature>
<feature type="transmembrane region" description="Helical" evidence="1">
    <location>
        <begin position="200"/>
        <end position="220"/>
    </location>
</feature>
<feature type="transmembrane region" description="Helical" evidence="1">
    <location>
        <begin position="237"/>
        <end position="257"/>
    </location>
</feature>
<feature type="transmembrane region" description="Helical" evidence="1">
    <location>
        <begin position="264"/>
        <end position="284"/>
    </location>
</feature>
<feature type="transmembrane region" description="Helical" evidence="1">
    <location>
        <begin position="289"/>
        <end position="309"/>
    </location>
</feature>
<feature type="transmembrane region" description="Helical" evidence="1">
    <location>
        <begin position="338"/>
        <end position="358"/>
    </location>
</feature>
<protein>
    <recommendedName>
        <fullName evidence="1">Phospho-N-acetylmuramoyl-pentapeptide-transferase</fullName>
        <ecNumber evidence="1">2.7.8.13</ecNumber>
    </recommendedName>
    <alternativeName>
        <fullName evidence="1">UDP-MurNAc-pentapeptide phosphotransferase</fullName>
    </alternativeName>
</protein>
<reference key="1">
    <citation type="journal article" date="2006" name="J. Bacteriol.">
        <title>The genome sequence of the obligately chemolithoautotrophic, facultatively anaerobic bacterium Thiobacillus denitrificans.</title>
        <authorList>
            <person name="Beller H.R."/>
            <person name="Chain P.S."/>
            <person name="Letain T.E."/>
            <person name="Chakicherla A."/>
            <person name="Larimer F.W."/>
            <person name="Richardson P.M."/>
            <person name="Coleman M.A."/>
            <person name="Wood A.P."/>
            <person name="Kelly D.P."/>
        </authorList>
    </citation>
    <scope>NUCLEOTIDE SEQUENCE [LARGE SCALE GENOMIC DNA]</scope>
    <source>
        <strain>ATCC 25259 / T1</strain>
    </source>
</reference>
<dbReference type="EC" id="2.7.8.13" evidence="1"/>
<dbReference type="EMBL" id="CP000116">
    <property type="protein sequence ID" value="AAZ96069.1"/>
    <property type="molecule type" value="Genomic_DNA"/>
</dbReference>
<dbReference type="RefSeq" id="WP_011310629.1">
    <property type="nucleotide sequence ID" value="NC_007404.1"/>
</dbReference>
<dbReference type="SMR" id="Q3SMH6"/>
<dbReference type="STRING" id="292415.Tbd_0116"/>
<dbReference type="KEGG" id="tbd:Tbd_0116"/>
<dbReference type="eggNOG" id="COG0472">
    <property type="taxonomic scope" value="Bacteria"/>
</dbReference>
<dbReference type="HOGENOM" id="CLU_023982_0_0_4"/>
<dbReference type="OrthoDB" id="9805475at2"/>
<dbReference type="UniPathway" id="UPA00219"/>
<dbReference type="Proteomes" id="UP000008291">
    <property type="component" value="Chromosome"/>
</dbReference>
<dbReference type="GO" id="GO:0005886">
    <property type="term" value="C:plasma membrane"/>
    <property type="evidence" value="ECO:0007669"/>
    <property type="project" value="UniProtKB-SubCell"/>
</dbReference>
<dbReference type="GO" id="GO:0046872">
    <property type="term" value="F:metal ion binding"/>
    <property type="evidence" value="ECO:0007669"/>
    <property type="project" value="UniProtKB-KW"/>
</dbReference>
<dbReference type="GO" id="GO:0008963">
    <property type="term" value="F:phospho-N-acetylmuramoyl-pentapeptide-transferase activity"/>
    <property type="evidence" value="ECO:0007669"/>
    <property type="project" value="UniProtKB-UniRule"/>
</dbReference>
<dbReference type="GO" id="GO:0051992">
    <property type="term" value="F:UDP-N-acetylmuramoyl-L-alanyl-D-glutamyl-meso-2,6-diaminopimelyl-D-alanyl-D-alanine:undecaprenyl-phosphate transferase activity"/>
    <property type="evidence" value="ECO:0007669"/>
    <property type="project" value="RHEA"/>
</dbReference>
<dbReference type="GO" id="GO:0051301">
    <property type="term" value="P:cell division"/>
    <property type="evidence" value="ECO:0007669"/>
    <property type="project" value="UniProtKB-KW"/>
</dbReference>
<dbReference type="GO" id="GO:0071555">
    <property type="term" value="P:cell wall organization"/>
    <property type="evidence" value="ECO:0007669"/>
    <property type="project" value="UniProtKB-KW"/>
</dbReference>
<dbReference type="GO" id="GO:0009252">
    <property type="term" value="P:peptidoglycan biosynthetic process"/>
    <property type="evidence" value="ECO:0007669"/>
    <property type="project" value="UniProtKB-UniRule"/>
</dbReference>
<dbReference type="GO" id="GO:0008360">
    <property type="term" value="P:regulation of cell shape"/>
    <property type="evidence" value="ECO:0007669"/>
    <property type="project" value="UniProtKB-KW"/>
</dbReference>
<dbReference type="CDD" id="cd06852">
    <property type="entry name" value="GT_MraY"/>
    <property type="match status" value="1"/>
</dbReference>
<dbReference type="HAMAP" id="MF_00038">
    <property type="entry name" value="MraY"/>
    <property type="match status" value="1"/>
</dbReference>
<dbReference type="InterPro" id="IPR000715">
    <property type="entry name" value="Glycosyl_transferase_4"/>
</dbReference>
<dbReference type="InterPro" id="IPR003524">
    <property type="entry name" value="PNAcMuramoyl-5peptid_Trfase"/>
</dbReference>
<dbReference type="InterPro" id="IPR018480">
    <property type="entry name" value="PNAcMuramoyl-5peptid_Trfase_CS"/>
</dbReference>
<dbReference type="NCBIfam" id="TIGR00445">
    <property type="entry name" value="mraY"/>
    <property type="match status" value="1"/>
</dbReference>
<dbReference type="PANTHER" id="PTHR22926">
    <property type="entry name" value="PHOSPHO-N-ACETYLMURAMOYL-PENTAPEPTIDE-TRANSFERASE"/>
    <property type="match status" value="1"/>
</dbReference>
<dbReference type="PANTHER" id="PTHR22926:SF5">
    <property type="entry name" value="PHOSPHO-N-ACETYLMURAMOYL-PENTAPEPTIDE-TRANSFERASE HOMOLOG"/>
    <property type="match status" value="1"/>
</dbReference>
<dbReference type="Pfam" id="PF00953">
    <property type="entry name" value="Glycos_transf_4"/>
    <property type="match status" value="1"/>
</dbReference>
<dbReference type="Pfam" id="PF10555">
    <property type="entry name" value="MraY_sig1"/>
    <property type="match status" value="1"/>
</dbReference>
<dbReference type="PROSITE" id="PS01347">
    <property type="entry name" value="MRAY_1"/>
    <property type="match status" value="1"/>
</dbReference>
<dbReference type="PROSITE" id="PS01348">
    <property type="entry name" value="MRAY_2"/>
    <property type="match status" value="1"/>
</dbReference>
<sequence>MLLWLFQQLGEDIRAFNVFNYLTLRAVLAALTALTISFIVGPAVIRKLTALKIGQSVRSDGPQTHLVKAGTPTMGGALILVSVAVTTLLWADLSNDYVWLALMTLLGFGVIGWVDDWRKVVEKNSRGLASRWKYFWQSAIGLVVAVYLWQTASLPAHTELIIPFLKQATFGLSAAAFIALTYFVIVGASNAVNLTDGLDGLAILPTVMVASALAIFAYVAGNAVFSKYLGVPFVPGAGELAIFCAAMAGAGLAFLWFNAYPAEVFMGDVGALALGAALGVVAVVVRQEIILFIMCGVFVMETLSVMIQVASFKLTGKRVFRMAPIHHHYELKGWKENQVVVRFWIISMMLVLIGLSSLKLR</sequence>
<evidence type="ECO:0000255" key="1">
    <source>
        <dbReference type="HAMAP-Rule" id="MF_00038"/>
    </source>
</evidence>
<comment type="function">
    <text evidence="1">Catalyzes the initial step of the lipid cycle reactions in the biosynthesis of the cell wall peptidoglycan: transfers peptidoglycan precursor phospho-MurNAc-pentapeptide from UDP-MurNAc-pentapeptide onto the lipid carrier undecaprenyl phosphate, yielding undecaprenyl-pyrophosphoryl-MurNAc-pentapeptide, known as lipid I.</text>
</comment>
<comment type="catalytic activity">
    <reaction evidence="1">
        <text>UDP-N-acetyl-alpha-D-muramoyl-L-alanyl-gamma-D-glutamyl-meso-2,6-diaminopimeloyl-D-alanyl-D-alanine + di-trans,octa-cis-undecaprenyl phosphate = di-trans,octa-cis-undecaprenyl diphospho-N-acetyl-alpha-D-muramoyl-L-alanyl-D-glutamyl-meso-2,6-diaminopimeloyl-D-alanyl-D-alanine + UMP</text>
        <dbReference type="Rhea" id="RHEA:28386"/>
        <dbReference type="ChEBI" id="CHEBI:57865"/>
        <dbReference type="ChEBI" id="CHEBI:60392"/>
        <dbReference type="ChEBI" id="CHEBI:61386"/>
        <dbReference type="ChEBI" id="CHEBI:61387"/>
        <dbReference type="EC" id="2.7.8.13"/>
    </reaction>
</comment>
<comment type="cofactor">
    <cofactor evidence="1">
        <name>Mg(2+)</name>
        <dbReference type="ChEBI" id="CHEBI:18420"/>
    </cofactor>
</comment>
<comment type="pathway">
    <text evidence="1">Cell wall biogenesis; peptidoglycan biosynthesis.</text>
</comment>
<comment type="subcellular location">
    <subcellularLocation>
        <location evidence="1">Cell inner membrane</location>
        <topology evidence="1">Multi-pass membrane protein</topology>
    </subcellularLocation>
</comment>
<comment type="similarity">
    <text evidence="1">Belongs to the glycosyltransferase 4 family. MraY subfamily.</text>
</comment>